<dbReference type="EC" id="6.3.4.19" evidence="1"/>
<dbReference type="EMBL" id="CP000872">
    <property type="protein sequence ID" value="ABX62738.1"/>
    <property type="molecule type" value="Genomic_DNA"/>
</dbReference>
<dbReference type="RefSeq" id="WP_004692771.1">
    <property type="nucleotide sequence ID" value="NC_010103.1"/>
</dbReference>
<dbReference type="SMR" id="A9M7J1"/>
<dbReference type="GeneID" id="55591314"/>
<dbReference type="KEGG" id="bcs:BCAN_A1732"/>
<dbReference type="HOGENOM" id="CLU_018869_3_3_5"/>
<dbReference type="PhylomeDB" id="A9M7J1"/>
<dbReference type="Proteomes" id="UP000001385">
    <property type="component" value="Chromosome I"/>
</dbReference>
<dbReference type="GO" id="GO:0005737">
    <property type="term" value="C:cytoplasm"/>
    <property type="evidence" value="ECO:0007669"/>
    <property type="project" value="UniProtKB-SubCell"/>
</dbReference>
<dbReference type="GO" id="GO:0005524">
    <property type="term" value="F:ATP binding"/>
    <property type="evidence" value="ECO:0007669"/>
    <property type="project" value="UniProtKB-UniRule"/>
</dbReference>
<dbReference type="GO" id="GO:0032267">
    <property type="term" value="F:tRNA(Ile)-lysidine synthase activity"/>
    <property type="evidence" value="ECO:0007669"/>
    <property type="project" value="UniProtKB-EC"/>
</dbReference>
<dbReference type="GO" id="GO:0006400">
    <property type="term" value="P:tRNA modification"/>
    <property type="evidence" value="ECO:0007669"/>
    <property type="project" value="UniProtKB-UniRule"/>
</dbReference>
<dbReference type="CDD" id="cd01992">
    <property type="entry name" value="TilS_N"/>
    <property type="match status" value="1"/>
</dbReference>
<dbReference type="Gene3D" id="3.40.50.620">
    <property type="entry name" value="HUPs"/>
    <property type="match status" value="1"/>
</dbReference>
<dbReference type="HAMAP" id="MF_01161">
    <property type="entry name" value="tRNA_Ile_lys_synt"/>
    <property type="match status" value="1"/>
</dbReference>
<dbReference type="InterPro" id="IPR014729">
    <property type="entry name" value="Rossmann-like_a/b/a_fold"/>
</dbReference>
<dbReference type="InterPro" id="IPR011063">
    <property type="entry name" value="TilS/TtcA_N"/>
</dbReference>
<dbReference type="InterPro" id="IPR012094">
    <property type="entry name" value="tRNA_Ile_lys_synt"/>
</dbReference>
<dbReference type="InterPro" id="IPR012795">
    <property type="entry name" value="tRNA_Ile_lys_synt_N"/>
</dbReference>
<dbReference type="NCBIfam" id="TIGR02432">
    <property type="entry name" value="lysidine_TilS_N"/>
    <property type="match status" value="1"/>
</dbReference>
<dbReference type="PANTHER" id="PTHR43033">
    <property type="entry name" value="TRNA(ILE)-LYSIDINE SYNTHASE-RELATED"/>
    <property type="match status" value="1"/>
</dbReference>
<dbReference type="PANTHER" id="PTHR43033:SF1">
    <property type="entry name" value="TRNA(ILE)-LYSIDINE SYNTHASE-RELATED"/>
    <property type="match status" value="1"/>
</dbReference>
<dbReference type="Pfam" id="PF01171">
    <property type="entry name" value="ATP_bind_3"/>
    <property type="match status" value="1"/>
</dbReference>
<dbReference type="SUPFAM" id="SSF52402">
    <property type="entry name" value="Adenine nucleotide alpha hydrolases-like"/>
    <property type="match status" value="1"/>
</dbReference>
<evidence type="ECO:0000255" key="1">
    <source>
        <dbReference type="HAMAP-Rule" id="MF_01161"/>
    </source>
</evidence>
<accession>A9M7J1</accession>
<feature type="chain" id="PRO_1000085363" description="tRNA(Ile)-lysidine synthase">
    <location>
        <begin position="1"/>
        <end position="448"/>
    </location>
</feature>
<feature type="binding site" evidence="1">
    <location>
        <begin position="25"/>
        <end position="30"/>
    </location>
    <ligand>
        <name>ATP</name>
        <dbReference type="ChEBI" id="CHEBI:30616"/>
    </ligand>
</feature>
<proteinExistence type="inferred from homology"/>
<reference key="1">
    <citation type="submission" date="2007-10" db="EMBL/GenBank/DDBJ databases">
        <title>Brucella canis ATCC 23365 whole genome shotgun sequencing project.</title>
        <authorList>
            <person name="Setubal J.C."/>
            <person name="Bowns C."/>
            <person name="Boyle S."/>
            <person name="Crasta O.R."/>
            <person name="Czar M.J."/>
            <person name="Dharmanolla C."/>
            <person name="Gillespie J.J."/>
            <person name="Kenyon R.W."/>
            <person name="Lu J."/>
            <person name="Mane S."/>
            <person name="Mohapatra S."/>
            <person name="Nagrani S."/>
            <person name="Purkayastha A."/>
            <person name="Rajasimha H.K."/>
            <person name="Shallom J.M."/>
            <person name="Shallom S."/>
            <person name="Shukla M."/>
            <person name="Snyder E.E."/>
            <person name="Sobral B.W."/>
            <person name="Wattam A.R."/>
            <person name="Will R."/>
            <person name="Williams K."/>
            <person name="Yoo H."/>
            <person name="Bruce D."/>
            <person name="Detter C."/>
            <person name="Munk C."/>
            <person name="Brettin T.S."/>
        </authorList>
    </citation>
    <scope>NUCLEOTIDE SEQUENCE [LARGE SCALE GENOMIC DNA]</scope>
    <source>
        <strain>ATCC 23365 / NCTC 10854 / RM-666</strain>
    </source>
</reference>
<keyword id="KW-0067">ATP-binding</keyword>
<keyword id="KW-0963">Cytoplasm</keyword>
<keyword id="KW-0436">Ligase</keyword>
<keyword id="KW-0547">Nucleotide-binding</keyword>
<keyword id="KW-1185">Reference proteome</keyword>
<keyword id="KW-0819">tRNA processing</keyword>
<gene>
    <name evidence="1" type="primary">tilS</name>
    <name type="ordered locus">BCAN_A1732</name>
</gene>
<organism>
    <name type="scientific">Brucella canis (strain ATCC 23365 / NCTC 10854 / RM-666)</name>
    <dbReference type="NCBI Taxonomy" id="483179"/>
    <lineage>
        <taxon>Bacteria</taxon>
        <taxon>Pseudomonadati</taxon>
        <taxon>Pseudomonadota</taxon>
        <taxon>Alphaproteobacteria</taxon>
        <taxon>Hyphomicrobiales</taxon>
        <taxon>Brucellaceae</taxon>
        <taxon>Brucella/Ochrobactrum group</taxon>
        <taxon>Brucella</taxon>
    </lineage>
</organism>
<comment type="function">
    <text evidence="1">Ligates lysine onto the cytidine present at position 34 of the AUA codon-specific tRNA(Ile) that contains the anticodon CAU, in an ATP-dependent manner. Cytidine is converted to lysidine, thus changing the amino acid specificity of the tRNA from methionine to isoleucine.</text>
</comment>
<comment type="catalytic activity">
    <reaction evidence="1">
        <text>cytidine(34) in tRNA(Ile2) + L-lysine + ATP = lysidine(34) in tRNA(Ile2) + AMP + diphosphate + H(+)</text>
        <dbReference type="Rhea" id="RHEA:43744"/>
        <dbReference type="Rhea" id="RHEA-COMP:10625"/>
        <dbReference type="Rhea" id="RHEA-COMP:10670"/>
        <dbReference type="ChEBI" id="CHEBI:15378"/>
        <dbReference type="ChEBI" id="CHEBI:30616"/>
        <dbReference type="ChEBI" id="CHEBI:32551"/>
        <dbReference type="ChEBI" id="CHEBI:33019"/>
        <dbReference type="ChEBI" id="CHEBI:82748"/>
        <dbReference type="ChEBI" id="CHEBI:83665"/>
        <dbReference type="ChEBI" id="CHEBI:456215"/>
        <dbReference type="EC" id="6.3.4.19"/>
    </reaction>
</comment>
<comment type="subcellular location">
    <subcellularLocation>
        <location evidence="1">Cytoplasm</location>
    </subcellularLocation>
</comment>
<comment type="domain">
    <text>The N-terminal region contains the highly conserved SGGXDS motif, predicted to be a P-loop motif involved in ATP binding.</text>
</comment>
<comment type="similarity">
    <text evidence="1">Belongs to the tRNA(Ile)-lysidine synthase family.</text>
</comment>
<name>TILS_BRUC2</name>
<protein>
    <recommendedName>
        <fullName evidence="1">tRNA(Ile)-lysidine synthase</fullName>
        <ecNumber evidence="1">6.3.4.19</ecNumber>
    </recommendedName>
    <alternativeName>
        <fullName evidence="1">tRNA(Ile)-2-lysyl-cytidine synthase</fullName>
    </alternativeName>
    <alternativeName>
        <fullName evidence="1">tRNA(Ile)-lysidine synthetase</fullName>
    </alternativeName>
</protein>
<sequence>MGLSPVNIFKPFGLGRAKAVIAAVSGGSDSLGLLFLLKDYLSTLESPPVLIAVTVDHKLRAESALEAENVGLLCQKHGIMHCVLSWDDPKPAHGLAAAARTARYRLLVQAARDAGAGFIVTGHTENDQIETFLMRKARSGHCEARGLAAMSPRSLLEGSVELARPLLTVSRQALRDELTRRGIAWVDDPSNANIDYERPRVRLGVAAEADGQEVLEQIAQAGAARERDNAALVEALADPATLGVDAAGMMFLNADCYAALSPGARQLFSGLLASIAGGRRFLPGDGERRRIERMLSGQDAPRRLTVFGALIERGEKGAPHRFRRERRNLPKLDLVPGQHIVWDGRFCFFNSGGRSFEIAPPGRQELIDFLKNSGRDIESRRCEALLISPALYEGGKLASVPFLPGAEWPQGVHIERHFAIFDHVLPGHDFALAQAVEARLGRACAEIS</sequence>